<comment type="function">
    <text evidence="1">Master enzyme that delivers sulfur to a number of partners involved in Fe-S cluster assembly, tRNA modification or cofactor biosynthesis. Catalyzes the removal of elemental sulfur atoms from cysteine to produce alanine. Functions as a sulfur delivery protein for Fe-S cluster synthesis onto IscU, an Fe-S scaffold assembly protein, as well as other S acceptor proteins.</text>
</comment>
<comment type="catalytic activity">
    <reaction evidence="1">
        <text>(sulfur carrier)-H + L-cysteine = (sulfur carrier)-SH + L-alanine</text>
        <dbReference type="Rhea" id="RHEA:43892"/>
        <dbReference type="Rhea" id="RHEA-COMP:14737"/>
        <dbReference type="Rhea" id="RHEA-COMP:14739"/>
        <dbReference type="ChEBI" id="CHEBI:29917"/>
        <dbReference type="ChEBI" id="CHEBI:35235"/>
        <dbReference type="ChEBI" id="CHEBI:57972"/>
        <dbReference type="ChEBI" id="CHEBI:64428"/>
        <dbReference type="EC" id="2.8.1.7"/>
    </reaction>
</comment>
<comment type="cofactor">
    <cofactor evidence="1">
        <name>pyridoxal 5'-phosphate</name>
        <dbReference type="ChEBI" id="CHEBI:597326"/>
    </cofactor>
</comment>
<comment type="pathway">
    <text evidence="1">Cofactor biosynthesis; iron-sulfur cluster biosynthesis.</text>
</comment>
<comment type="subunit">
    <text evidence="1">Homodimer. Forms a heterotetramer with IscU, interacts with other sulfur acceptors.</text>
</comment>
<comment type="subcellular location">
    <subcellularLocation>
        <location evidence="1">Cytoplasm</location>
    </subcellularLocation>
</comment>
<comment type="similarity">
    <text evidence="1">Belongs to the class-V pyridoxal-phosphate-dependent aminotransferase family. NifS/IscS subfamily.</text>
</comment>
<evidence type="ECO:0000255" key="1">
    <source>
        <dbReference type="HAMAP-Rule" id="MF_00331"/>
    </source>
</evidence>
<proteinExistence type="inferred from homology"/>
<organism>
    <name type="scientific">Tolumonas auensis (strain DSM 9187 / NBRC 110442 / TA 4)</name>
    <dbReference type="NCBI Taxonomy" id="595494"/>
    <lineage>
        <taxon>Bacteria</taxon>
        <taxon>Pseudomonadati</taxon>
        <taxon>Pseudomonadota</taxon>
        <taxon>Gammaproteobacteria</taxon>
        <taxon>Aeromonadales</taxon>
        <taxon>Aeromonadaceae</taxon>
        <taxon>Tolumonas</taxon>
    </lineage>
</organism>
<name>ISCS_TOLAT</name>
<feature type="chain" id="PRO_1000205175" description="Cysteine desulfurase IscS">
    <location>
        <begin position="1"/>
        <end position="404"/>
    </location>
</feature>
<feature type="active site" description="Cysteine persulfide intermediate" evidence="1">
    <location>
        <position position="328"/>
    </location>
</feature>
<feature type="binding site" evidence="1">
    <location>
        <begin position="75"/>
        <end position="76"/>
    </location>
    <ligand>
        <name>pyridoxal 5'-phosphate</name>
        <dbReference type="ChEBI" id="CHEBI:597326"/>
    </ligand>
</feature>
<feature type="binding site" evidence="1">
    <location>
        <position position="155"/>
    </location>
    <ligand>
        <name>pyridoxal 5'-phosphate</name>
        <dbReference type="ChEBI" id="CHEBI:597326"/>
    </ligand>
</feature>
<feature type="binding site" evidence="1">
    <location>
        <position position="183"/>
    </location>
    <ligand>
        <name>pyridoxal 5'-phosphate</name>
        <dbReference type="ChEBI" id="CHEBI:597326"/>
    </ligand>
</feature>
<feature type="binding site" evidence="1">
    <location>
        <begin position="203"/>
        <end position="205"/>
    </location>
    <ligand>
        <name>pyridoxal 5'-phosphate</name>
        <dbReference type="ChEBI" id="CHEBI:597326"/>
    </ligand>
</feature>
<feature type="binding site" evidence="1">
    <location>
        <position position="243"/>
    </location>
    <ligand>
        <name>pyridoxal 5'-phosphate</name>
        <dbReference type="ChEBI" id="CHEBI:597326"/>
    </ligand>
</feature>
<feature type="binding site" description="via persulfide group" evidence="1">
    <location>
        <position position="328"/>
    </location>
    <ligand>
        <name>[2Fe-2S] cluster</name>
        <dbReference type="ChEBI" id="CHEBI:190135"/>
        <note>ligand shared with IscU</note>
    </ligand>
</feature>
<feature type="modified residue" description="N6-(pyridoxal phosphate)lysine" evidence="1">
    <location>
        <position position="206"/>
    </location>
</feature>
<sequence length="404" mass="44475">MKLPIYLDYSATCPVDPRAAEKMMQCLTLDGNFGNPASRSHRFGWQAEEAVDEARNHVADLIGADPREIVFTSGATESNNLAIKGAAHFYVKQGKHIITCKTEHKAVLDTCRHLESEGYEVTYLDPQSDGLLTLPQIEAAMRPDTILVSIMHVNNEIGVIQDLAAIGELCRARKILFHVDAAQSAGKVEIDVDAMKIDLLSLSAHKVYGPKGIGALYVRRKPRVRLEAQMHGGGHERGMRSGTLPTHQIVGMGEAFRIAKAEMAEENVRIKALRDRLYDGLKDIEQVFVNGSTEHRVAGNLNISFAYVEGESLMMALKDLAVSSGSACTSASLEPSYVLRALGLNDELAHSSIRFSIGRFTTAEEIDYAIGLIRDSIGKLRDLSPLWDMYKEGIDLSKVEWVSH</sequence>
<accession>C4L7K2</accession>
<keyword id="KW-0001">2Fe-2S</keyword>
<keyword id="KW-0963">Cytoplasm</keyword>
<keyword id="KW-0408">Iron</keyword>
<keyword id="KW-0411">Iron-sulfur</keyword>
<keyword id="KW-0479">Metal-binding</keyword>
<keyword id="KW-0663">Pyridoxal phosphate</keyword>
<keyword id="KW-1185">Reference proteome</keyword>
<keyword id="KW-0808">Transferase</keyword>
<gene>
    <name evidence="1" type="primary">iscS</name>
    <name type="ordered locus">Tola_2019</name>
</gene>
<protein>
    <recommendedName>
        <fullName evidence="1">Cysteine desulfurase IscS</fullName>
        <ecNumber evidence="1">2.8.1.7</ecNumber>
    </recommendedName>
</protein>
<dbReference type="EC" id="2.8.1.7" evidence="1"/>
<dbReference type="EMBL" id="CP001616">
    <property type="protein sequence ID" value="ACQ93618.1"/>
    <property type="molecule type" value="Genomic_DNA"/>
</dbReference>
<dbReference type="RefSeq" id="WP_015879086.1">
    <property type="nucleotide sequence ID" value="NC_012691.1"/>
</dbReference>
<dbReference type="SMR" id="C4L7K2"/>
<dbReference type="STRING" id="595494.Tola_2019"/>
<dbReference type="KEGG" id="tau:Tola_2019"/>
<dbReference type="eggNOG" id="COG1104">
    <property type="taxonomic scope" value="Bacteria"/>
</dbReference>
<dbReference type="HOGENOM" id="CLU_003433_0_2_6"/>
<dbReference type="OrthoDB" id="9808002at2"/>
<dbReference type="UniPathway" id="UPA00266"/>
<dbReference type="Proteomes" id="UP000009073">
    <property type="component" value="Chromosome"/>
</dbReference>
<dbReference type="GO" id="GO:1990221">
    <property type="term" value="C:L-cysteine desulfurase complex"/>
    <property type="evidence" value="ECO:0007669"/>
    <property type="project" value="UniProtKB-ARBA"/>
</dbReference>
<dbReference type="GO" id="GO:0051537">
    <property type="term" value="F:2 iron, 2 sulfur cluster binding"/>
    <property type="evidence" value="ECO:0007669"/>
    <property type="project" value="UniProtKB-UniRule"/>
</dbReference>
<dbReference type="GO" id="GO:0031071">
    <property type="term" value="F:cysteine desulfurase activity"/>
    <property type="evidence" value="ECO:0007669"/>
    <property type="project" value="UniProtKB-UniRule"/>
</dbReference>
<dbReference type="GO" id="GO:0046872">
    <property type="term" value="F:metal ion binding"/>
    <property type="evidence" value="ECO:0007669"/>
    <property type="project" value="UniProtKB-KW"/>
</dbReference>
<dbReference type="GO" id="GO:0030170">
    <property type="term" value="F:pyridoxal phosphate binding"/>
    <property type="evidence" value="ECO:0007669"/>
    <property type="project" value="UniProtKB-UniRule"/>
</dbReference>
<dbReference type="GO" id="GO:0044571">
    <property type="term" value="P:[2Fe-2S] cluster assembly"/>
    <property type="evidence" value="ECO:0007669"/>
    <property type="project" value="UniProtKB-UniRule"/>
</dbReference>
<dbReference type="FunFam" id="3.40.640.10:FF:000003">
    <property type="entry name" value="Cysteine desulfurase IscS"/>
    <property type="match status" value="1"/>
</dbReference>
<dbReference type="FunFam" id="3.90.1150.10:FF:000002">
    <property type="entry name" value="Cysteine desulfurase IscS"/>
    <property type="match status" value="1"/>
</dbReference>
<dbReference type="Gene3D" id="3.90.1150.10">
    <property type="entry name" value="Aspartate Aminotransferase, domain 1"/>
    <property type="match status" value="1"/>
</dbReference>
<dbReference type="Gene3D" id="3.40.640.10">
    <property type="entry name" value="Type I PLP-dependent aspartate aminotransferase-like (Major domain)"/>
    <property type="match status" value="1"/>
</dbReference>
<dbReference type="HAMAP" id="MF_00331">
    <property type="entry name" value="Cys_desulf_IscS"/>
    <property type="match status" value="1"/>
</dbReference>
<dbReference type="InterPro" id="IPR000192">
    <property type="entry name" value="Aminotrans_V_dom"/>
</dbReference>
<dbReference type="InterPro" id="IPR020578">
    <property type="entry name" value="Aminotrans_V_PyrdxlP_BS"/>
</dbReference>
<dbReference type="InterPro" id="IPR010240">
    <property type="entry name" value="Cys_deSase_IscS"/>
</dbReference>
<dbReference type="InterPro" id="IPR016454">
    <property type="entry name" value="Cysteine_dSase"/>
</dbReference>
<dbReference type="InterPro" id="IPR015424">
    <property type="entry name" value="PyrdxlP-dep_Trfase"/>
</dbReference>
<dbReference type="InterPro" id="IPR015421">
    <property type="entry name" value="PyrdxlP-dep_Trfase_major"/>
</dbReference>
<dbReference type="InterPro" id="IPR015422">
    <property type="entry name" value="PyrdxlP-dep_Trfase_small"/>
</dbReference>
<dbReference type="NCBIfam" id="TIGR02006">
    <property type="entry name" value="IscS"/>
    <property type="match status" value="1"/>
</dbReference>
<dbReference type="NCBIfam" id="NF002806">
    <property type="entry name" value="PRK02948.1"/>
    <property type="match status" value="1"/>
</dbReference>
<dbReference type="NCBIfam" id="NF010611">
    <property type="entry name" value="PRK14012.1"/>
    <property type="match status" value="1"/>
</dbReference>
<dbReference type="PANTHER" id="PTHR11601:SF34">
    <property type="entry name" value="CYSTEINE DESULFURASE"/>
    <property type="match status" value="1"/>
</dbReference>
<dbReference type="PANTHER" id="PTHR11601">
    <property type="entry name" value="CYSTEINE DESULFURYLASE FAMILY MEMBER"/>
    <property type="match status" value="1"/>
</dbReference>
<dbReference type="Pfam" id="PF00266">
    <property type="entry name" value="Aminotran_5"/>
    <property type="match status" value="1"/>
</dbReference>
<dbReference type="PIRSF" id="PIRSF005572">
    <property type="entry name" value="NifS"/>
    <property type="match status" value="1"/>
</dbReference>
<dbReference type="SUPFAM" id="SSF53383">
    <property type="entry name" value="PLP-dependent transferases"/>
    <property type="match status" value="1"/>
</dbReference>
<dbReference type="PROSITE" id="PS00595">
    <property type="entry name" value="AA_TRANSFER_CLASS_5"/>
    <property type="match status" value="1"/>
</dbReference>
<reference key="1">
    <citation type="submission" date="2009-05" db="EMBL/GenBank/DDBJ databases">
        <title>Complete sequence of Tolumonas auensis DSM 9187.</title>
        <authorList>
            <consortium name="US DOE Joint Genome Institute"/>
            <person name="Lucas S."/>
            <person name="Copeland A."/>
            <person name="Lapidus A."/>
            <person name="Glavina del Rio T."/>
            <person name="Tice H."/>
            <person name="Bruce D."/>
            <person name="Goodwin L."/>
            <person name="Pitluck S."/>
            <person name="Chertkov O."/>
            <person name="Brettin T."/>
            <person name="Detter J.C."/>
            <person name="Han C."/>
            <person name="Larimer F."/>
            <person name="Land M."/>
            <person name="Hauser L."/>
            <person name="Kyrpides N."/>
            <person name="Mikhailova N."/>
            <person name="Spring S."/>
            <person name="Beller H."/>
        </authorList>
    </citation>
    <scope>NUCLEOTIDE SEQUENCE [LARGE SCALE GENOMIC DNA]</scope>
    <source>
        <strain>DSM 9187 / NBRC 110442 / TA 4</strain>
    </source>
</reference>